<accession>Q29RH7</accession>
<gene>
    <name type="primary">TSPAN12</name>
</gene>
<feature type="chain" id="PRO_0000284964" description="Tetraspanin-12">
    <location>
        <begin position="1"/>
        <end position="305"/>
    </location>
</feature>
<feature type="topological domain" description="Cytoplasmic" evidence="2">
    <location>
        <begin position="1"/>
        <end position="12"/>
    </location>
</feature>
<feature type="transmembrane region" description="Helical" evidence="2">
    <location>
        <begin position="13"/>
        <end position="33"/>
    </location>
</feature>
<feature type="topological domain" description="Extracellular" evidence="2">
    <location>
        <begin position="34"/>
        <end position="59"/>
    </location>
</feature>
<feature type="transmembrane region" description="Helical" evidence="2">
    <location>
        <begin position="60"/>
        <end position="80"/>
    </location>
</feature>
<feature type="topological domain" description="Cytoplasmic" evidence="2">
    <location>
        <begin position="81"/>
        <end position="89"/>
    </location>
</feature>
<feature type="transmembrane region" description="Helical" evidence="2">
    <location>
        <begin position="90"/>
        <end position="110"/>
    </location>
</feature>
<feature type="topological domain" description="Extracellular" evidence="2">
    <location>
        <begin position="111"/>
        <end position="224"/>
    </location>
</feature>
<feature type="transmembrane region" description="Helical" evidence="2">
    <location>
        <begin position="225"/>
        <end position="245"/>
    </location>
</feature>
<feature type="topological domain" description="Cytoplasmic" evidence="2">
    <location>
        <begin position="246"/>
        <end position="305"/>
    </location>
</feature>
<feature type="lipid moiety-binding region" description="S-palmitoyl cysteine" evidence="1">
    <location>
        <position position="9"/>
    </location>
</feature>
<feature type="lipid moiety-binding region" description="S-palmitoyl cysteine" evidence="1">
    <location>
        <position position="12"/>
    </location>
</feature>
<feature type="lipid moiety-binding region" description="S-palmitoyl cysteine" evidence="1">
    <location>
        <position position="83"/>
    </location>
</feature>
<name>TSN12_BOVIN</name>
<proteinExistence type="evidence at transcript level"/>
<evidence type="ECO:0000250" key="1"/>
<evidence type="ECO:0000255" key="2"/>
<evidence type="ECO:0000305" key="3"/>
<organism>
    <name type="scientific">Bos taurus</name>
    <name type="common">Bovine</name>
    <dbReference type="NCBI Taxonomy" id="9913"/>
    <lineage>
        <taxon>Eukaryota</taxon>
        <taxon>Metazoa</taxon>
        <taxon>Chordata</taxon>
        <taxon>Craniata</taxon>
        <taxon>Vertebrata</taxon>
        <taxon>Euteleostomi</taxon>
        <taxon>Mammalia</taxon>
        <taxon>Eutheria</taxon>
        <taxon>Laurasiatheria</taxon>
        <taxon>Artiodactyla</taxon>
        <taxon>Ruminantia</taxon>
        <taxon>Pecora</taxon>
        <taxon>Bovidae</taxon>
        <taxon>Bovinae</taxon>
        <taxon>Bos</taxon>
    </lineage>
</organism>
<sequence>MAREDSVKCLRCLLYALNLLFWLMSISVLAVSAWMRDYLNNVLTLTAETRVEEAVILTYFPVVHPVMIAVCCFLIIVGMLGYCGTVKRNLLLLAWYFGSLLVIFCVELACGVWTYEQEIMVPVQWSDMVTLKARMTNYGLPRYRWLTHAWNFFQREFKCCGVVYFTDWLEMTEMDWPPDSCCVREFPGCSKQAHQEDLSDLYQEGCGKKMYSFLRGTKQLQVLRFLGISIGVTQILAMILTITLLWALYYDRREPGTDQMMALKNDTTQHLPCHSVELLKPSLSRIFEHTSMANSFNTHFEMEEL</sequence>
<protein>
    <recommendedName>
        <fullName>Tetraspanin-12</fullName>
        <shortName>Tspan-12</shortName>
    </recommendedName>
</protein>
<dbReference type="EMBL" id="BC114167">
    <property type="protein sequence ID" value="AAI14168.1"/>
    <property type="molecule type" value="mRNA"/>
</dbReference>
<dbReference type="RefSeq" id="NP_001039977.1">
    <property type="nucleotide sequence ID" value="NM_001046512.2"/>
</dbReference>
<dbReference type="RefSeq" id="XP_005205711.1">
    <property type="nucleotide sequence ID" value="XM_005205654.2"/>
</dbReference>
<dbReference type="RefSeq" id="XP_005205712.1">
    <property type="nucleotide sequence ID" value="XM_005205655.3"/>
</dbReference>
<dbReference type="RefSeq" id="XP_015325742.1">
    <property type="nucleotide sequence ID" value="XM_015470256.1"/>
</dbReference>
<dbReference type="FunCoup" id="Q29RH7">
    <property type="interactions" value="82"/>
</dbReference>
<dbReference type="STRING" id="9913.ENSBTAP00000061273"/>
<dbReference type="PaxDb" id="9913-ENSBTAP00000020385"/>
<dbReference type="GeneID" id="613639"/>
<dbReference type="KEGG" id="bta:613639"/>
<dbReference type="CTD" id="23554"/>
<dbReference type="eggNOG" id="KOG3882">
    <property type="taxonomic scope" value="Eukaryota"/>
</dbReference>
<dbReference type="HOGENOM" id="CLU_055524_1_0_1"/>
<dbReference type="InParanoid" id="Q29RH7"/>
<dbReference type="OrthoDB" id="8813994at2759"/>
<dbReference type="TreeFam" id="TF316345"/>
<dbReference type="Proteomes" id="UP000009136">
    <property type="component" value="Unplaced"/>
</dbReference>
<dbReference type="GO" id="GO:0005886">
    <property type="term" value="C:plasma membrane"/>
    <property type="evidence" value="ECO:0000250"/>
    <property type="project" value="UniProtKB"/>
</dbReference>
<dbReference type="GO" id="GO:0001525">
    <property type="term" value="P:angiogenesis"/>
    <property type="evidence" value="ECO:0007669"/>
    <property type="project" value="UniProtKB-KW"/>
</dbReference>
<dbReference type="GO" id="GO:0007166">
    <property type="term" value="P:cell surface receptor signaling pathway"/>
    <property type="evidence" value="ECO:0000250"/>
    <property type="project" value="UniProtKB"/>
</dbReference>
<dbReference type="GO" id="GO:0045765">
    <property type="term" value="P:regulation of angiogenesis"/>
    <property type="evidence" value="ECO:0000250"/>
    <property type="project" value="UniProtKB"/>
</dbReference>
<dbReference type="GO" id="GO:0010842">
    <property type="term" value="P:retina layer formation"/>
    <property type="evidence" value="ECO:0000250"/>
    <property type="project" value="UniProtKB"/>
</dbReference>
<dbReference type="CDD" id="cd03157">
    <property type="entry name" value="TM4SF12_like_LEL"/>
    <property type="match status" value="1"/>
</dbReference>
<dbReference type="FunFam" id="1.10.1450.10:FF:000009">
    <property type="entry name" value="Tetraspanin"/>
    <property type="match status" value="1"/>
</dbReference>
<dbReference type="Gene3D" id="1.10.1450.10">
    <property type="entry name" value="Tetraspanin"/>
    <property type="match status" value="1"/>
</dbReference>
<dbReference type="InterPro" id="IPR018499">
    <property type="entry name" value="Tetraspanin/Peripherin"/>
</dbReference>
<dbReference type="InterPro" id="IPR000301">
    <property type="entry name" value="Tetraspanin_animals"/>
</dbReference>
<dbReference type="InterPro" id="IPR018503">
    <property type="entry name" value="Tetraspanin_CS"/>
</dbReference>
<dbReference type="InterPro" id="IPR008952">
    <property type="entry name" value="Tetraspanin_EC2_sf"/>
</dbReference>
<dbReference type="PANTHER" id="PTHR19282">
    <property type="entry name" value="TETRASPANIN"/>
    <property type="match status" value="1"/>
</dbReference>
<dbReference type="PANTHER" id="PTHR19282:SF462">
    <property type="entry name" value="TETRASPANIN-12"/>
    <property type="match status" value="1"/>
</dbReference>
<dbReference type="Pfam" id="PF00335">
    <property type="entry name" value="Tetraspanin"/>
    <property type="match status" value="1"/>
</dbReference>
<dbReference type="PIRSF" id="PIRSF002419">
    <property type="entry name" value="Tetraspanin"/>
    <property type="match status" value="1"/>
</dbReference>
<dbReference type="PRINTS" id="PR00259">
    <property type="entry name" value="TMFOUR"/>
</dbReference>
<dbReference type="SUPFAM" id="SSF48652">
    <property type="entry name" value="Tetraspanin"/>
    <property type="match status" value="1"/>
</dbReference>
<dbReference type="PROSITE" id="PS00421">
    <property type="entry name" value="TM4_1"/>
    <property type="match status" value="1"/>
</dbReference>
<keyword id="KW-0037">Angiogenesis</keyword>
<keyword id="KW-1003">Cell membrane</keyword>
<keyword id="KW-0449">Lipoprotein</keyword>
<keyword id="KW-0472">Membrane</keyword>
<keyword id="KW-0564">Palmitate</keyword>
<keyword id="KW-1185">Reference proteome</keyword>
<keyword id="KW-0812">Transmembrane</keyword>
<keyword id="KW-1133">Transmembrane helix</keyword>
<comment type="function">
    <text evidence="1">Regulator of cell surface receptor signal transduction. Plays a central role in retinal vascularization by regulating norrin (NDP) signal transduction. Acts in concert with norrin (NDP) to promote FZD4 multimerization and subsequent activation of FZD4, leading to promote accumulation of beta-catenin (CTNNB1) and stimulate LEF/TCF-mediated transcriptional programs. Suprisingly, it only activates the norrin (NDP)-dependent activation of FZD4, while it does not activate the Wnt-dependent activation of FZD4, suggesting the existence of a Wnt-independent signaling that also promote accumulation the beta-catenin (CTNNB1). Acts as a regulator of membrane proteinases such as ADAM10 and MMP14/MT1-MMP. Activates ADAM10-dependent cleavage activity of amyloid precursor protein (APP). Activates MMP14/MT1-MMP-dependent cleavage activity (By similarity).</text>
</comment>
<comment type="subunit">
    <text evidence="1">Component of a complex, at least composed of TSPAN12, FZD4 and norrin (NDP) (By similarity). Interacts (when palmitoylated) with ADAM10. Interacts with MMP14/MT1-MMP (By similarity).</text>
</comment>
<comment type="subcellular location">
    <subcellularLocation>
        <location evidence="1">Cell membrane</location>
        <topology evidence="1">Multi-pass membrane protein</topology>
    </subcellularLocation>
</comment>
<comment type="PTM">
    <text evidence="1">Palmitoylated; required for interaction with ADAM10. The precise position of palmitoylated residues is unclear and occurs either on Cys-9, Cys-12 and/or Cys-83 (By similarity).</text>
</comment>
<comment type="similarity">
    <text evidence="3">Belongs to the tetraspanin (TM4SF) family.</text>
</comment>
<reference key="1">
    <citation type="submission" date="2006-02" db="EMBL/GenBank/DDBJ databases">
        <authorList>
            <consortium name="NIH - Mammalian Gene Collection (MGC) project"/>
        </authorList>
    </citation>
    <scope>NUCLEOTIDE SEQUENCE [LARGE SCALE MRNA]</scope>
    <source>
        <strain>Hereford</strain>
        <tissue>Heart ventricle</tissue>
    </source>
</reference>